<reference key="1">
    <citation type="journal article" date="1990" name="Virology">
        <title>Genetic variation and multigene families in African swine fever virus.</title>
        <authorList>
            <person name="de la Vega I."/>
            <person name="Vinuela E."/>
            <person name="Blasco R."/>
        </authorList>
    </citation>
    <scope>NUCLEOTIDE SEQUENCE [GENOMIC DNA]</scope>
</reference>
<comment type="function">
    <text evidence="1">Plays a role in virus cell tropism, and may be required for efficient virus replication in macrophages.</text>
</comment>
<comment type="similarity">
    <text evidence="2">Belongs to the asfivirus MGF 360 family.</text>
</comment>
<sequence length="382" mass="44336">MNSLQVLTKKVLIETKAFSKYHEDDIFILQQLGLWWEIGPIGFCKQCKMVTGGSMSCSDVDSYELDRALVKAVKENQTDLIKIFVSWGAEINFGIMCAKTKQTKDLCIQLGADPEFLDVGLYNMFVYLIKQKKVLLAIDIYYDNISILDSFDSHDFHVLIDFVYNRFILYLDEKEEEMTRNTLVLKFWYKFAIDFKLTKPIRYLSKKFPHLDIWRLQTAIYLGNIDEVHHAYFQEDIRLSLNVMMFLACARPGNKLGIYYCFALGADLDRALERLISFNSINRKISGETRLCIEGSYLSNVYFCIGLGANPYTKKIQETIKQKHSNIMILLFSKKKILSPHSVLQNKILDPSDVRKMISTYENTESFYPFFSLAVKLIQQAK</sequence>
<name>3604L_ASFL5</name>
<proteinExistence type="inferred from homology"/>
<organismHost>
    <name type="scientific">Ornithodoros</name>
    <name type="common">relapsing fever ticks</name>
    <dbReference type="NCBI Taxonomy" id="6937"/>
</organismHost>
<organismHost>
    <name type="scientific">Sus scrofa</name>
    <name type="common">Pig</name>
    <dbReference type="NCBI Taxonomy" id="9823"/>
</organismHost>
<organism>
    <name type="scientific">African swine fever virus (isolate Portugal/Lis 57/1957)</name>
    <name type="common">ASFV</name>
    <dbReference type="NCBI Taxonomy" id="10499"/>
    <lineage>
        <taxon>Viruses</taxon>
        <taxon>Varidnaviria</taxon>
        <taxon>Bamfordvirae</taxon>
        <taxon>Nucleocytoviricota</taxon>
        <taxon>Pokkesviricetes</taxon>
        <taxon>Asfuvirales</taxon>
        <taxon>Asfarviridae</taxon>
        <taxon>Asfivirus</taxon>
        <taxon>African swine fever virus</taxon>
    </lineage>
</organism>
<gene>
    <name type="ORF">LIS382</name>
</gene>
<evidence type="ECO:0000250" key="1"/>
<evidence type="ECO:0000305" key="2"/>
<protein>
    <recommendedName>
        <fullName>Protein MGF 360-4L</fullName>
    </recommendedName>
</protein>
<feature type="chain" id="PRO_0000221945" description="Protein MGF 360-4L">
    <location>
        <begin position="1"/>
        <end position="382"/>
    </location>
</feature>
<dbReference type="EMBL" id="M58155">
    <property type="protein sequence ID" value="AAA42708.1"/>
    <property type="molecule type" value="Genomic_DNA"/>
</dbReference>
<dbReference type="PIR" id="B45348">
    <property type="entry name" value="B45348"/>
</dbReference>
<dbReference type="SMR" id="P26712"/>
<dbReference type="GO" id="GO:0042330">
    <property type="term" value="P:taxis"/>
    <property type="evidence" value="ECO:0007669"/>
    <property type="project" value="InterPro"/>
</dbReference>
<dbReference type="InterPro" id="IPR002595">
    <property type="entry name" value="ASFV_MGF360"/>
</dbReference>
<dbReference type="Pfam" id="PF01671">
    <property type="entry name" value="ASFV_360"/>
    <property type="match status" value="1"/>
</dbReference>
<accession>P26712</accession>